<name>RS3_BLOPB</name>
<accession>Q493K2</accession>
<reference key="1">
    <citation type="journal article" date="2005" name="Genome Res.">
        <title>Genome sequence of Blochmannia pennsylvanicus indicates parallel evolutionary trends among bacterial mutualists of insects.</title>
        <authorList>
            <person name="Degnan P.H."/>
            <person name="Lazarus A.B."/>
            <person name="Wernegreen J.J."/>
        </authorList>
    </citation>
    <scope>NUCLEOTIDE SEQUENCE [LARGE SCALE GENOMIC DNA]</scope>
    <source>
        <strain>BPEN</strain>
    </source>
</reference>
<feature type="chain" id="PRO_0000230681" description="Small ribosomal subunit protein uS3">
    <location>
        <begin position="1"/>
        <end position="236"/>
    </location>
</feature>
<feature type="domain" description="KH type-2" evidence="1">
    <location>
        <begin position="39"/>
        <end position="107"/>
    </location>
</feature>
<proteinExistence type="inferred from homology"/>
<sequence length="236" mass="26687">MGQKVHPNGVRLGITKTWHSTWYANNKDFSDNLGNDFKVRHFLMQKLSKALVSRIIIERPAKSIRVTVYTARPGLIIGKKGEDIEKLRKNIARISGVPTQLNIAEVRKPELDAKLLADNIASQLERRVVFRRAMKRVVQNAMRLGAKGIKVEVSGRLSGAEIARTEWYREGRVPLHTLRADIDYSLSEARTTYGIIGIKVWVFKGEILGDVLLLNTGYSSDQTINNSSKKKHKTRI</sequence>
<gene>
    <name evidence="1" type="primary">rpsC</name>
    <name type="ordered locus">BPEN_204</name>
</gene>
<protein>
    <recommendedName>
        <fullName evidence="1">Small ribosomal subunit protein uS3</fullName>
    </recommendedName>
    <alternativeName>
        <fullName evidence="2">30S ribosomal protein S3</fullName>
    </alternativeName>
</protein>
<comment type="function">
    <text evidence="1">Binds the lower part of the 30S subunit head. Binds mRNA in the 70S ribosome, positioning it for translation.</text>
</comment>
<comment type="subunit">
    <text evidence="1">Part of the 30S ribosomal subunit. Forms a tight complex with proteins S10 and S14.</text>
</comment>
<comment type="similarity">
    <text evidence="1">Belongs to the universal ribosomal protein uS3 family.</text>
</comment>
<keyword id="KW-1185">Reference proteome</keyword>
<keyword id="KW-0687">Ribonucleoprotein</keyword>
<keyword id="KW-0689">Ribosomal protein</keyword>
<keyword id="KW-0694">RNA-binding</keyword>
<keyword id="KW-0699">rRNA-binding</keyword>
<evidence type="ECO:0000255" key="1">
    <source>
        <dbReference type="HAMAP-Rule" id="MF_01309"/>
    </source>
</evidence>
<evidence type="ECO:0000305" key="2"/>
<dbReference type="EMBL" id="CP000016">
    <property type="protein sequence ID" value="AAZ40838.1"/>
    <property type="molecule type" value="Genomic_DNA"/>
</dbReference>
<dbReference type="RefSeq" id="WP_011282745.1">
    <property type="nucleotide sequence ID" value="NC_007292.1"/>
</dbReference>
<dbReference type="SMR" id="Q493K2"/>
<dbReference type="STRING" id="291272.BPEN_204"/>
<dbReference type="KEGG" id="bpn:BPEN_204"/>
<dbReference type="eggNOG" id="COG0092">
    <property type="taxonomic scope" value="Bacteria"/>
</dbReference>
<dbReference type="HOGENOM" id="CLU_058591_0_2_6"/>
<dbReference type="OrthoDB" id="9806396at2"/>
<dbReference type="Proteomes" id="UP000007794">
    <property type="component" value="Chromosome"/>
</dbReference>
<dbReference type="GO" id="GO:0022627">
    <property type="term" value="C:cytosolic small ribosomal subunit"/>
    <property type="evidence" value="ECO:0007669"/>
    <property type="project" value="TreeGrafter"/>
</dbReference>
<dbReference type="GO" id="GO:0003729">
    <property type="term" value="F:mRNA binding"/>
    <property type="evidence" value="ECO:0007669"/>
    <property type="project" value="UniProtKB-UniRule"/>
</dbReference>
<dbReference type="GO" id="GO:0019843">
    <property type="term" value="F:rRNA binding"/>
    <property type="evidence" value="ECO:0007669"/>
    <property type="project" value="UniProtKB-UniRule"/>
</dbReference>
<dbReference type="GO" id="GO:0003735">
    <property type="term" value="F:structural constituent of ribosome"/>
    <property type="evidence" value="ECO:0007669"/>
    <property type="project" value="InterPro"/>
</dbReference>
<dbReference type="GO" id="GO:0006412">
    <property type="term" value="P:translation"/>
    <property type="evidence" value="ECO:0007669"/>
    <property type="project" value="UniProtKB-UniRule"/>
</dbReference>
<dbReference type="CDD" id="cd02412">
    <property type="entry name" value="KH-II_30S_S3"/>
    <property type="match status" value="1"/>
</dbReference>
<dbReference type="FunFam" id="3.30.1140.32:FF:000001">
    <property type="entry name" value="30S ribosomal protein S3"/>
    <property type="match status" value="1"/>
</dbReference>
<dbReference type="FunFam" id="3.30.300.20:FF:000001">
    <property type="entry name" value="30S ribosomal protein S3"/>
    <property type="match status" value="1"/>
</dbReference>
<dbReference type="Gene3D" id="3.30.300.20">
    <property type="match status" value="1"/>
</dbReference>
<dbReference type="Gene3D" id="3.30.1140.32">
    <property type="entry name" value="Ribosomal protein S3, C-terminal domain"/>
    <property type="match status" value="1"/>
</dbReference>
<dbReference type="HAMAP" id="MF_01309_B">
    <property type="entry name" value="Ribosomal_uS3_B"/>
    <property type="match status" value="1"/>
</dbReference>
<dbReference type="InterPro" id="IPR004087">
    <property type="entry name" value="KH_dom"/>
</dbReference>
<dbReference type="InterPro" id="IPR015946">
    <property type="entry name" value="KH_dom-like_a/b"/>
</dbReference>
<dbReference type="InterPro" id="IPR004044">
    <property type="entry name" value="KH_dom_type_2"/>
</dbReference>
<dbReference type="InterPro" id="IPR009019">
    <property type="entry name" value="KH_sf_prok-type"/>
</dbReference>
<dbReference type="InterPro" id="IPR036419">
    <property type="entry name" value="Ribosomal_S3_C_sf"/>
</dbReference>
<dbReference type="InterPro" id="IPR005704">
    <property type="entry name" value="Ribosomal_uS3_bac-typ"/>
</dbReference>
<dbReference type="InterPro" id="IPR001351">
    <property type="entry name" value="Ribosomal_uS3_C"/>
</dbReference>
<dbReference type="InterPro" id="IPR018280">
    <property type="entry name" value="Ribosomal_uS3_CS"/>
</dbReference>
<dbReference type="NCBIfam" id="TIGR01009">
    <property type="entry name" value="rpsC_bact"/>
    <property type="match status" value="1"/>
</dbReference>
<dbReference type="PANTHER" id="PTHR11760">
    <property type="entry name" value="30S/40S RIBOSOMAL PROTEIN S3"/>
    <property type="match status" value="1"/>
</dbReference>
<dbReference type="PANTHER" id="PTHR11760:SF19">
    <property type="entry name" value="SMALL RIBOSOMAL SUBUNIT PROTEIN US3C"/>
    <property type="match status" value="1"/>
</dbReference>
<dbReference type="Pfam" id="PF07650">
    <property type="entry name" value="KH_2"/>
    <property type="match status" value="1"/>
</dbReference>
<dbReference type="Pfam" id="PF00189">
    <property type="entry name" value="Ribosomal_S3_C"/>
    <property type="match status" value="1"/>
</dbReference>
<dbReference type="SMART" id="SM00322">
    <property type="entry name" value="KH"/>
    <property type="match status" value="1"/>
</dbReference>
<dbReference type="SUPFAM" id="SSF54814">
    <property type="entry name" value="Prokaryotic type KH domain (KH-domain type II)"/>
    <property type="match status" value="1"/>
</dbReference>
<dbReference type="SUPFAM" id="SSF54821">
    <property type="entry name" value="Ribosomal protein S3 C-terminal domain"/>
    <property type="match status" value="1"/>
</dbReference>
<dbReference type="PROSITE" id="PS50823">
    <property type="entry name" value="KH_TYPE_2"/>
    <property type="match status" value="1"/>
</dbReference>
<dbReference type="PROSITE" id="PS00548">
    <property type="entry name" value="RIBOSOMAL_S3"/>
    <property type="match status" value="1"/>
</dbReference>
<organism>
    <name type="scientific">Blochmanniella pennsylvanica (strain BPEN)</name>
    <dbReference type="NCBI Taxonomy" id="291272"/>
    <lineage>
        <taxon>Bacteria</taxon>
        <taxon>Pseudomonadati</taxon>
        <taxon>Pseudomonadota</taxon>
        <taxon>Gammaproteobacteria</taxon>
        <taxon>Enterobacterales</taxon>
        <taxon>Enterobacteriaceae</taxon>
        <taxon>ant endosymbionts</taxon>
        <taxon>Candidatus Blochmanniella</taxon>
    </lineage>
</organism>